<organism>
    <name type="scientific">Roseiflexus castenholzii (strain DSM 13941 / HLO8)</name>
    <dbReference type="NCBI Taxonomy" id="383372"/>
    <lineage>
        <taxon>Bacteria</taxon>
        <taxon>Bacillati</taxon>
        <taxon>Chloroflexota</taxon>
        <taxon>Chloroflexia</taxon>
        <taxon>Chloroflexales</taxon>
        <taxon>Roseiflexineae</taxon>
        <taxon>Roseiflexaceae</taxon>
        <taxon>Roseiflexus</taxon>
    </lineage>
</organism>
<sequence>MRPKISIIGAGFVGSTAAHWIASKELGDVVLVDIIDGVPQGKGLDLLQAGPIEGFDVKITGTNDYAATANSDIIIVTSGAPRKPGMSREDLIRVNADITRDCISKAAPLSPDAVIIMVNNPLDTMTYLAKQVSGFPKNRVVGQAGVLDTARYRTFIAMEAGVSVEDIQAMLMGGHGDEMVPLPRFTTISGIPVTEFISKERLDAIIERTRKGGGEIVNLLKTGSAYYAPSAATVQMVEAILRDKKRVLPCACYLEGEYGLNDIYFGVPCVLGAGGVERVLELPLNDEEMALVRKSAEAVSSSIATLKQM</sequence>
<accession>A7NG29</accession>
<protein>
    <recommendedName>
        <fullName evidence="1">Malate dehydrogenase</fullName>
        <ecNumber evidence="1">1.1.1.37</ecNumber>
    </recommendedName>
</protein>
<feature type="chain" id="PRO_1000191656" description="Malate dehydrogenase">
    <location>
        <begin position="1"/>
        <end position="309"/>
    </location>
</feature>
<feature type="active site" description="Proton acceptor" evidence="1">
    <location>
        <position position="175"/>
    </location>
</feature>
<feature type="binding site" evidence="1">
    <location>
        <begin position="9"/>
        <end position="14"/>
    </location>
    <ligand>
        <name>NAD(+)</name>
        <dbReference type="ChEBI" id="CHEBI:57540"/>
    </ligand>
</feature>
<feature type="binding site" evidence="1">
    <location>
        <position position="33"/>
    </location>
    <ligand>
        <name>NAD(+)</name>
        <dbReference type="ChEBI" id="CHEBI:57540"/>
    </ligand>
</feature>
<feature type="binding site" evidence="1">
    <location>
        <position position="82"/>
    </location>
    <ligand>
        <name>substrate</name>
    </ligand>
</feature>
<feature type="binding site" evidence="1">
    <location>
        <position position="88"/>
    </location>
    <ligand>
        <name>substrate</name>
    </ligand>
</feature>
<feature type="binding site" evidence="1">
    <location>
        <position position="95"/>
    </location>
    <ligand>
        <name>NAD(+)</name>
        <dbReference type="ChEBI" id="CHEBI:57540"/>
    </ligand>
</feature>
<feature type="binding site" evidence="1">
    <location>
        <begin position="118"/>
        <end position="120"/>
    </location>
    <ligand>
        <name>NAD(+)</name>
        <dbReference type="ChEBI" id="CHEBI:57540"/>
    </ligand>
</feature>
<feature type="binding site" evidence="1">
    <location>
        <position position="120"/>
    </location>
    <ligand>
        <name>substrate</name>
    </ligand>
</feature>
<feature type="binding site" evidence="1">
    <location>
        <position position="151"/>
    </location>
    <ligand>
        <name>substrate</name>
    </ligand>
</feature>
<evidence type="ECO:0000255" key="1">
    <source>
        <dbReference type="HAMAP-Rule" id="MF_00487"/>
    </source>
</evidence>
<gene>
    <name evidence="1" type="primary">mdh</name>
    <name type="ordered locus">Rcas_0283</name>
</gene>
<keyword id="KW-0520">NAD</keyword>
<keyword id="KW-0560">Oxidoreductase</keyword>
<keyword id="KW-1185">Reference proteome</keyword>
<keyword id="KW-0816">Tricarboxylic acid cycle</keyword>
<dbReference type="EC" id="1.1.1.37" evidence="1"/>
<dbReference type="EMBL" id="CP000804">
    <property type="protein sequence ID" value="ABU56416.1"/>
    <property type="molecule type" value="Genomic_DNA"/>
</dbReference>
<dbReference type="RefSeq" id="WP_011997820.1">
    <property type="nucleotide sequence ID" value="NC_009767.1"/>
</dbReference>
<dbReference type="SMR" id="A7NG29"/>
<dbReference type="STRING" id="383372.Rcas_0283"/>
<dbReference type="KEGG" id="rca:Rcas_0283"/>
<dbReference type="eggNOG" id="COG0039">
    <property type="taxonomic scope" value="Bacteria"/>
</dbReference>
<dbReference type="HOGENOM" id="CLU_045401_2_1_0"/>
<dbReference type="OrthoDB" id="9802969at2"/>
<dbReference type="Proteomes" id="UP000000263">
    <property type="component" value="Chromosome"/>
</dbReference>
<dbReference type="GO" id="GO:0004459">
    <property type="term" value="F:L-lactate dehydrogenase activity"/>
    <property type="evidence" value="ECO:0007669"/>
    <property type="project" value="TreeGrafter"/>
</dbReference>
<dbReference type="GO" id="GO:0030060">
    <property type="term" value="F:L-malate dehydrogenase (NAD+) activity"/>
    <property type="evidence" value="ECO:0007669"/>
    <property type="project" value="UniProtKB-UniRule"/>
</dbReference>
<dbReference type="GO" id="GO:0006089">
    <property type="term" value="P:lactate metabolic process"/>
    <property type="evidence" value="ECO:0007669"/>
    <property type="project" value="TreeGrafter"/>
</dbReference>
<dbReference type="GO" id="GO:0006099">
    <property type="term" value="P:tricarboxylic acid cycle"/>
    <property type="evidence" value="ECO:0007669"/>
    <property type="project" value="UniProtKB-UniRule"/>
</dbReference>
<dbReference type="CDD" id="cd01339">
    <property type="entry name" value="LDH-like_MDH"/>
    <property type="match status" value="1"/>
</dbReference>
<dbReference type="FunFam" id="3.40.50.720:FF:000018">
    <property type="entry name" value="Malate dehydrogenase"/>
    <property type="match status" value="1"/>
</dbReference>
<dbReference type="FunFam" id="3.90.110.10:FF:000004">
    <property type="entry name" value="Malate dehydrogenase"/>
    <property type="match status" value="1"/>
</dbReference>
<dbReference type="Gene3D" id="3.90.110.10">
    <property type="entry name" value="Lactate dehydrogenase/glycoside hydrolase, family 4, C-terminal"/>
    <property type="match status" value="1"/>
</dbReference>
<dbReference type="Gene3D" id="3.40.50.720">
    <property type="entry name" value="NAD(P)-binding Rossmann-like Domain"/>
    <property type="match status" value="1"/>
</dbReference>
<dbReference type="HAMAP" id="MF_00487">
    <property type="entry name" value="Malate_dehydrog_3"/>
    <property type="match status" value="1"/>
</dbReference>
<dbReference type="InterPro" id="IPR001557">
    <property type="entry name" value="L-lactate/malate_DH"/>
</dbReference>
<dbReference type="InterPro" id="IPR022383">
    <property type="entry name" value="Lactate/malate_DH_C"/>
</dbReference>
<dbReference type="InterPro" id="IPR001236">
    <property type="entry name" value="Lactate/malate_DH_N"/>
</dbReference>
<dbReference type="InterPro" id="IPR015955">
    <property type="entry name" value="Lactate_DH/Glyco_Ohase_4_C"/>
</dbReference>
<dbReference type="InterPro" id="IPR011275">
    <property type="entry name" value="Malate_DH_type3"/>
</dbReference>
<dbReference type="InterPro" id="IPR036291">
    <property type="entry name" value="NAD(P)-bd_dom_sf"/>
</dbReference>
<dbReference type="NCBIfam" id="TIGR01763">
    <property type="entry name" value="MalateDH_bact"/>
    <property type="match status" value="1"/>
</dbReference>
<dbReference type="NCBIfam" id="NF004863">
    <property type="entry name" value="PRK06223.1"/>
    <property type="match status" value="1"/>
</dbReference>
<dbReference type="PANTHER" id="PTHR43128">
    <property type="entry name" value="L-2-HYDROXYCARBOXYLATE DEHYDROGENASE (NAD(P)(+))"/>
    <property type="match status" value="1"/>
</dbReference>
<dbReference type="PANTHER" id="PTHR43128:SF16">
    <property type="entry name" value="L-LACTATE DEHYDROGENASE"/>
    <property type="match status" value="1"/>
</dbReference>
<dbReference type="Pfam" id="PF02866">
    <property type="entry name" value="Ldh_1_C"/>
    <property type="match status" value="1"/>
</dbReference>
<dbReference type="Pfam" id="PF00056">
    <property type="entry name" value="Ldh_1_N"/>
    <property type="match status" value="1"/>
</dbReference>
<dbReference type="PIRSF" id="PIRSF000102">
    <property type="entry name" value="Lac_mal_DH"/>
    <property type="match status" value="1"/>
</dbReference>
<dbReference type="PRINTS" id="PR00086">
    <property type="entry name" value="LLDHDRGNASE"/>
</dbReference>
<dbReference type="SUPFAM" id="SSF56327">
    <property type="entry name" value="LDH C-terminal domain-like"/>
    <property type="match status" value="1"/>
</dbReference>
<dbReference type="SUPFAM" id="SSF51735">
    <property type="entry name" value="NAD(P)-binding Rossmann-fold domains"/>
    <property type="match status" value="1"/>
</dbReference>
<proteinExistence type="inferred from homology"/>
<reference key="1">
    <citation type="submission" date="2007-08" db="EMBL/GenBank/DDBJ databases">
        <title>Complete sequence of Roseiflexus castenholzii DSM 13941.</title>
        <authorList>
            <consortium name="US DOE Joint Genome Institute"/>
            <person name="Copeland A."/>
            <person name="Lucas S."/>
            <person name="Lapidus A."/>
            <person name="Barry K."/>
            <person name="Glavina del Rio T."/>
            <person name="Dalin E."/>
            <person name="Tice H."/>
            <person name="Pitluck S."/>
            <person name="Thompson L.S."/>
            <person name="Brettin T."/>
            <person name="Bruce D."/>
            <person name="Detter J.C."/>
            <person name="Han C."/>
            <person name="Tapia R."/>
            <person name="Schmutz J."/>
            <person name="Larimer F."/>
            <person name="Land M."/>
            <person name="Hauser L."/>
            <person name="Kyrpides N."/>
            <person name="Mikhailova N."/>
            <person name="Bryant D.A."/>
            <person name="Hanada S."/>
            <person name="Tsukatani Y."/>
            <person name="Richardson P."/>
        </authorList>
    </citation>
    <scope>NUCLEOTIDE SEQUENCE [LARGE SCALE GENOMIC DNA]</scope>
    <source>
        <strain>DSM 13941 / HLO8</strain>
    </source>
</reference>
<comment type="function">
    <text evidence="1">Catalyzes the reversible oxidation of malate to oxaloacetate.</text>
</comment>
<comment type="catalytic activity">
    <reaction evidence="1">
        <text>(S)-malate + NAD(+) = oxaloacetate + NADH + H(+)</text>
        <dbReference type="Rhea" id="RHEA:21432"/>
        <dbReference type="ChEBI" id="CHEBI:15378"/>
        <dbReference type="ChEBI" id="CHEBI:15589"/>
        <dbReference type="ChEBI" id="CHEBI:16452"/>
        <dbReference type="ChEBI" id="CHEBI:57540"/>
        <dbReference type="ChEBI" id="CHEBI:57945"/>
        <dbReference type="EC" id="1.1.1.37"/>
    </reaction>
</comment>
<comment type="similarity">
    <text evidence="1">Belongs to the LDH/MDH superfamily. MDH type 3 family.</text>
</comment>
<name>MDH_ROSCS</name>